<accession>P57052</accession>
<accession>Q6YNC2</accession>
<accession>Q8NBA1</accession>
<accession>Q8NFF6</accession>
<feature type="chain" id="PRO_0000081769" description="Splicing regulator RBM11">
    <location>
        <begin position="1"/>
        <end position="281"/>
    </location>
</feature>
<feature type="domain" description="RRM" evidence="1">
    <location>
        <begin position="10"/>
        <end position="87"/>
    </location>
</feature>
<feature type="region of interest" description="Disordered" evidence="2">
    <location>
        <begin position="184"/>
        <end position="281"/>
    </location>
</feature>
<feature type="short sequence motif" description="Bipartite nuclear localization signal" evidence="6">
    <location>
        <begin position="245"/>
        <end position="280"/>
    </location>
</feature>
<feature type="compositionally biased region" description="Polar residues" evidence="2">
    <location>
        <begin position="187"/>
        <end position="217"/>
    </location>
</feature>
<feature type="compositionally biased region" description="Polar residues" evidence="2">
    <location>
        <begin position="229"/>
        <end position="242"/>
    </location>
</feature>
<feature type="compositionally biased region" description="Basic residues" evidence="2">
    <location>
        <begin position="271"/>
        <end position="281"/>
    </location>
</feature>
<feature type="splice variant" id="VSP_061576" description="In isoform 3.">
    <original>AGPLTKVTICKDREGKPK</original>
    <variation>GVLALLNQLTKVLRAVLR</variation>
    <location>
        <begin position="33"/>
        <end position="50"/>
    </location>
</feature>
<feature type="splice variant" id="VSP_061577" description="In isoform 3.">
    <location>
        <begin position="51"/>
        <end position="281"/>
    </location>
</feature>
<feature type="sequence variant" id="VAR_024621" description="In dbSNP:rs409782." evidence="3">
    <original>L</original>
    <variation>V</variation>
    <location>
        <position position="116"/>
    </location>
</feature>
<feature type="sequence conflict" description="In Ref. 2; BAC03638 and 5; AAL82535." evidence="6" ref="2 5">
    <original>Q</original>
    <variation>QFLIG</variation>
    <location>
        <position position="32"/>
    </location>
</feature>
<feature type="helix" evidence="8">
    <location>
        <begin position="8"/>
        <end position="10"/>
    </location>
</feature>
<feature type="strand" evidence="8">
    <location>
        <begin position="11"/>
        <end position="15"/>
    </location>
</feature>
<feature type="helix" evidence="8">
    <location>
        <begin position="23"/>
        <end position="30"/>
    </location>
</feature>
<feature type="helix" evidence="8">
    <location>
        <begin position="31"/>
        <end position="33"/>
    </location>
</feature>
<feature type="strand" evidence="8">
    <location>
        <begin position="36"/>
        <end position="43"/>
    </location>
</feature>
<feature type="strand" evidence="8">
    <location>
        <begin position="49"/>
        <end position="59"/>
    </location>
</feature>
<feature type="helix" evidence="8">
    <location>
        <begin position="61"/>
        <end position="70"/>
    </location>
</feature>
<reference key="1">
    <citation type="journal article" date="2003" name="Gene">
        <title>Juxtacentromeric region of human chromosome 21: a boundary between centromeric heterochromatin and euchromatic chromosome arms.</title>
        <authorList>
            <person name="Brun M.-E."/>
            <person name="Ruault M."/>
            <person name="Ventura M."/>
            <person name="Roizes G."/>
            <person name="De Sario A."/>
        </authorList>
    </citation>
    <scope>NUCLEOTIDE SEQUENCE [MRNA] (ISOFORM 3)</scope>
    <scope>TISSUE SPECIFICITY</scope>
    <source>
        <tissue>Hypothalamus</tissue>
    </source>
</reference>
<reference key="2">
    <citation type="journal article" date="2004" name="Nat. Genet.">
        <title>Complete sequencing and characterization of 21,243 full-length human cDNAs.</title>
        <authorList>
            <person name="Ota T."/>
            <person name="Suzuki Y."/>
            <person name="Nishikawa T."/>
            <person name="Otsuki T."/>
            <person name="Sugiyama T."/>
            <person name="Irie R."/>
            <person name="Wakamatsu A."/>
            <person name="Hayashi K."/>
            <person name="Sato H."/>
            <person name="Nagai K."/>
            <person name="Kimura K."/>
            <person name="Makita H."/>
            <person name="Sekine M."/>
            <person name="Obayashi M."/>
            <person name="Nishi T."/>
            <person name="Shibahara T."/>
            <person name="Tanaka T."/>
            <person name="Ishii S."/>
            <person name="Yamamoto J."/>
            <person name="Saito K."/>
            <person name="Kawai Y."/>
            <person name="Isono Y."/>
            <person name="Nakamura Y."/>
            <person name="Nagahari K."/>
            <person name="Murakami K."/>
            <person name="Yasuda T."/>
            <person name="Iwayanagi T."/>
            <person name="Wagatsuma M."/>
            <person name="Shiratori A."/>
            <person name="Sudo H."/>
            <person name="Hosoiri T."/>
            <person name="Kaku Y."/>
            <person name="Kodaira H."/>
            <person name="Kondo H."/>
            <person name="Sugawara M."/>
            <person name="Takahashi M."/>
            <person name="Kanda K."/>
            <person name="Yokoi T."/>
            <person name="Furuya T."/>
            <person name="Kikkawa E."/>
            <person name="Omura Y."/>
            <person name="Abe K."/>
            <person name="Kamihara K."/>
            <person name="Katsuta N."/>
            <person name="Sato K."/>
            <person name="Tanikawa M."/>
            <person name="Yamazaki M."/>
            <person name="Ninomiya K."/>
            <person name="Ishibashi T."/>
            <person name="Yamashita H."/>
            <person name="Murakawa K."/>
            <person name="Fujimori K."/>
            <person name="Tanai H."/>
            <person name="Kimata M."/>
            <person name="Watanabe M."/>
            <person name="Hiraoka S."/>
            <person name="Chiba Y."/>
            <person name="Ishida S."/>
            <person name="Ono Y."/>
            <person name="Takiguchi S."/>
            <person name="Watanabe S."/>
            <person name="Yosida M."/>
            <person name="Hotuta T."/>
            <person name="Kusano J."/>
            <person name="Kanehori K."/>
            <person name="Takahashi-Fujii A."/>
            <person name="Hara H."/>
            <person name="Tanase T.-O."/>
            <person name="Nomura Y."/>
            <person name="Togiya S."/>
            <person name="Komai F."/>
            <person name="Hara R."/>
            <person name="Takeuchi K."/>
            <person name="Arita M."/>
            <person name="Imose N."/>
            <person name="Musashino K."/>
            <person name="Yuuki H."/>
            <person name="Oshima A."/>
            <person name="Sasaki N."/>
            <person name="Aotsuka S."/>
            <person name="Yoshikawa Y."/>
            <person name="Matsunawa H."/>
            <person name="Ichihara T."/>
            <person name="Shiohata N."/>
            <person name="Sano S."/>
            <person name="Moriya S."/>
            <person name="Momiyama H."/>
            <person name="Satoh N."/>
            <person name="Takami S."/>
            <person name="Terashima Y."/>
            <person name="Suzuki O."/>
            <person name="Nakagawa S."/>
            <person name="Senoh A."/>
            <person name="Mizoguchi H."/>
            <person name="Goto Y."/>
            <person name="Shimizu F."/>
            <person name="Wakebe H."/>
            <person name="Hishigaki H."/>
            <person name="Watanabe T."/>
            <person name="Sugiyama A."/>
            <person name="Takemoto M."/>
            <person name="Kawakami B."/>
            <person name="Yamazaki M."/>
            <person name="Watanabe K."/>
            <person name="Kumagai A."/>
            <person name="Itakura S."/>
            <person name="Fukuzumi Y."/>
            <person name="Fujimori Y."/>
            <person name="Komiyama M."/>
            <person name="Tashiro H."/>
            <person name="Tanigami A."/>
            <person name="Fujiwara T."/>
            <person name="Ono T."/>
            <person name="Yamada K."/>
            <person name="Fujii Y."/>
            <person name="Ozaki K."/>
            <person name="Hirao M."/>
            <person name="Ohmori Y."/>
            <person name="Kawabata A."/>
            <person name="Hikiji T."/>
            <person name="Kobatake N."/>
            <person name="Inagaki H."/>
            <person name="Ikema Y."/>
            <person name="Okamoto S."/>
            <person name="Okitani R."/>
            <person name="Kawakami T."/>
            <person name="Noguchi S."/>
            <person name="Itoh T."/>
            <person name="Shigeta K."/>
            <person name="Senba T."/>
            <person name="Matsumura K."/>
            <person name="Nakajima Y."/>
            <person name="Mizuno T."/>
            <person name="Morinaga M."/>
            <person name="Sasaki M."/>
            <person name="Togashi T."/>
            <person name="Oyama M."/>
            <person name="Hata H."/>
            <person name="Watanabe M."/>
            <person name="Komatsu T."/>
            <person name="Mizushima-Sugano J."/>
            <person name="Satoh T."/>
            <person name="Shirai Y."/>
            <person name="Takahashi Y."/>
            <person name="Nakagawa K."/>
            <person name="Okumura K."/>
            <person name="Nagase T."/>
            <person name="Nomura N."/>
            <person name="Kikuchi H."/>
            <person name="Masuho Y."/>
            <person name="Yamashita R."/>
            <person name="Nakai K."/>
            <person name="Yada T."/>
            <person name="Nakamura Y."/>
            <person name="Ohara O."/>
            <person name="Isogai T."/>
            <person name="Sugano S."/>
        </authorList>
    </citation>
    <scope>NUCLEOTIDE SEQUENCE [LARGE SCALE MRNA]</scope>
    <source>
        <tissue>Fetal brain</tissue>
    </source>
</reference>
<reference key="3">
    <citation type="journal article" date="2000" name="Nature">
        <title>The DNA sequence of human chromosome 21.</title>
        <authorList>
            <person name="Hattori M."/>
            <person name="Fujiyama A."/>
            <person name="Taylor T.D."/>
            <person name="Watanabe H."/>
            <person name="Yada T."/>
            <person name="Park H.-S."/>
            <person name="Toyoda A."/>
            <person name="Ishii K."/>
            <person name="Totoki Y."/>
            <person name="Choi D.-K."/>
            <person name="Groner Y."/>
            <person name="Soeda E."/>
            <person name="Ohki M."/>
            <person name="Takagi T."/>
            <person name="Sakaki Y."/>
            <person name="Taudien S."/>
            <person name="Blechschmidt K."/>
            <person name="Polley A."/>
            <person name="Menzel U."/>
            <person name="Delabar J."/>
            <person name="Kumpf K."/>
            <person name="Lehmann R."/>
            <person name="Patterson D."/>
            <person name="Reichwald K."/>
            <person name="Rump A."/>
            <person name="Schillhabel M."/>
            <person name="Schudy A."/>
            <person name="Zimmermann W."/>
            <person name="Rosenthal A."/>
            <person name="Kudoh J."/>
            <person name="Shibuya K."/>
            <person name="Kawasaki K."/>
            <person name="Asakawa S."/>
            <person name="Shintani A."/>
            <person name="Sasaki T."/>
            <person name="Nagamine K."/>
            <person name="Mitsuyama S."/>
            <person name="Antonarakis S.E."/>
            <person name="Minoshima S."/>
            <person name="Shimizu N."/>
            <person name="Nordsiek G."/>
            <person name="Hornischer K."/>
            <person name="Brandt P."/>
            <person name="Scharfe M."/>
            <person name="Schoen O."/>
            <person name="Desario A."/>
            <person name="Reichelt J."/>
            <person name="Kauer G."/>
            <person name="Bloecker H."/>
            <person name="Ramser J."/>
            <person name="Beck A."/>
            <person name="Klages S."/>
            <person name="Hennig S."/>
            <person name="Riesselmann L."/>
            <person name="Dagand E."/>
            <person name="Wehrmeyer S."/>
            <person name="Borzym K."/>
            <person name="Gardiner K."/>
            <person name="Nizetic D."/>
            <person name="Francis F."/>
            <person name="Lehrach H."/>
            <person name="Reinhardt R."/>
            <person name="Yaspo M.-L."/>
        </authorList>
    </citation>
    <scope>NUCLEOTIDE SEQUENCE [LARGE SCALE GENOMIC DNA]</scope>
</reference>
<reference key="4">
    <citation type="journal article" date="2004" name="Genome Res.">
        <title>The status, quality, and expansion of the NIH full-length cDNA project: the Mammalian Gene Collection (MGC).</title>
        <authorList>
            <consortium name="The MGC Project Team"/>
        </authorList>
    </citation>
    <scope>NUCLEOTIDE SEQUENCE [LARGE SCALE MRNA]</scope>
    <source>
        <tissue>Brain</tissue>
    </source>
</reference>
<reference key="5">
    <citation type="journal article" date="2002" name="Genomics">
        <title>Annotation of human chromosome 21 for relevance to Down syndrome: gene structure and expression analysis.</title>
        <authorList>
            <person name="Gardiner K."/>
            <person name="Slavov D."/>
            <person name="Bechtel L."/>
            <person name="Davisson M."/>
        </authorList>
    </citation>
    <scope>NUCLEOTIDE SEQUENCE [MRNA] OF 9-281</scope>
    <scope>TISSUE SPECIFICITY</scope>
    <scope>VARIANT VAL-116</scope>
</reference>
<reference key="6">
    <citation type="journal article" date="2012" name="Nucleic Acids Res.">
        <title>The RNA recognition motif protein RBM11 is a novel tissue-specific splicing regulator.</title>
        <authorList>
            <person name="Pedrotti S."/>
            <person name="Busa R."/>
            <person name="Compagnucci C."/>
            <person name="Sette C."/>
        </authorList>
    </citation>
    <scope>FUNCTION</scope>
    <scope>TISSUE SPECIFICITY</scope>
    <scope>SUBCELLULAR LOCATION</scope>
    <scope>RNA-BINDING</scope>
    <scope>SUBUNIT</scope>
</reference>
<reference key="7">
    <citation type="submission" date="2009-02" db="PDB data bank">
        <title>Crystal structure of RRM-domain derived from human putative RNA-binding protein 11.</title>
        <authorList>
            <consortium name="RIKEN structural genomics initiative (RSGI)"/>
        </authorList>
    </citation>
    <scope>X-RAY CRYSTALLOGRAPHY (1.54 ANGSTROMS) OF 1-82</scope>
</reference>
<gene>
    <name evidence="7" type="primary">RBM11</name>
</gene>
<protein>
    <recommendedName>
        <fullName evidence="6">Splicing regulator RBM11</fullName>
    </recommendedName>
    <alternativeName>
        <fullName>RNA-binding motif protein 11</fullName>
    </alternativeName>
</protein>
<name>RBM11_HUMAN</name>
<proteinExistence type="evidence at protein level"/>
<sequence>MFPAQEEADRTVFVGNLEARVREEILYELFLQAGPLTKVTICKDREGKPKSFGFVCFKHPESVSYAIALLNGIRLYGRPINVQYRFGSSRSSEPANQSFESCVKINSHNYRNEEMLVGRSSFPMQYFPINNTSLPQEYFLFQKMQWHVYNPVLQLPYYEMTAPLPNSASVSSSLNHVPDLEAGPSSYKWTHQQPSDSDLYQMTAPLPNSASVSSSLNHVPDLEAGPSSYKWTHQQPSDSDLYQMNKRKRQKQTSDSDSSTDNNRGNECSQKFRKSKKKKRY</sequence>
<dbReference type="EMBL" id="AF519623">
    <property type="protein sequence ID" value="AAM75350.1"/>
    <property type="status" value="ALT_SEQ"/>
    <property type="molecule type" value="mRNA"/>
</dbReference>
<dbReference type="EMBL" id="AK091331">
    <property type="protein sequence ID" value="BAC03638.1"/>
    <property type="status" value="ALT_FRAME"/>
    <property type="molecule type" value="mRNA"/>
</dbReference>
<dbReference type="EMBL" id="AP001660">
    <property type="protein sequence ID" value="BAA95545.1"/>
    <property type="molecule type" value="Genomic_DNA"/>
</dbReference>
<dbReference type="EMBL" id="BC030196">
    <property type="protein sequence ID" value="AAH30196.2"/>
    <property type="status" value="ALT_INIT"/>
    <property type="molecule type" value="mRNA"/>
</dbReference>
<dbReference type="EMBL" id="AY077695">
    <property type="protein sequence ID" value="AAL82535.1"/>
    <property type="status" value="ALT_FRAME"/>
    <property type="molecule type" value="mRNA"/>
</dbReference>
<dbReference type="CCDS" id="CCDS46635.1">
    <molecule id="P57052-1"/>
</dbReference>
<dbReference type="RefSeq" id="NP_001307531.1">
    <property type="nucleotide sequence ID" value="NM_001320602.1"/>
</dbReference>
<dbReference type="RefSeq" id="NP_658983.3">
    <molecule id="P57052-1"/>
    <property type="nucleotide sequence ID" value="NM_144770.4"/>
</dbReference>
<dbReference type="RefSeq" id="XP_016883874.1">
    <property type="nucleotide sequence ID" value="XM_017028385.1"/>
</dbReference>
<dbReference type="RefSeq" id="XP_016883875.1">
    <property type="nucleotide sequence ID" value="XM_017028386.1"/>
</dbReference>
<dbReference type="RefSeq" id="XP_016883876.1">
    <property type="nucleotide sequence ID" value="XM_017028387.1"/>
</dbReference>
<dbReference type="PDB" id="2YWK">
    <property type="method" value="X-ray"/>
    <property type="resolution" value="1.54 A"/>
    <property type="chains" value="A=1-82"/>
</dbReference>
<dbReference type="PDBsum" id="2YWK"/>
<dbReference type="SMR" id="P57052"/>
<dbReference type="BioGRID" id="119845">
    <property type="interactions" value="179"/>
</dbReference>
<dbReference type="FunCoup" id="P57052">
    <property type="interactions" value="1682"/>
</dbReference>
<dbReference type="IntAct" id="P57052">
    <property type="interactions" value="109"/>
</dbReference>
<dbReference type="MINT" id="P57052"/>
<dbReference type="STRING" id="9606.ENSP00000383421"/>
<dbReference type="iPTMnet" id="P57052"/>
<dbReference type="PhosphoSitePlus" id="P57052"/>
<dbReference type="BioMuta" id="RBM11"/>
<dbReference type="DMDM" id="9978670"/>
<dbReference type="MassIVE" id="P57052"/>
<dbReference type="PaxDb" id="9606-ENSP00000383421"/>
<dbReference type="PeptideAtlas" id="P57052"/>
<dbReference type="Antibodypedia" id="22166">
    <property type="antibodies" value="126 antibodies from 23 providers"/>
</dbReference>
<dbReference type="DNASU" id="54033"/>
<dbReference type="Ensembl" id="ENST00000400577.4">
    <molecule id="P57052-1"/>
    <property type="protein sequence ID" value="ENSP00000383421.3"/>
    <property type="gene ID" value="ENSG00000185272.14"/>
</dbReference>
<dbReference type="GeneID" id="54033"/>
<dbReference type="KEGG" id="hsa:54033"/>
<dbReference type="MANE-Select" id="ENST00000400577.4">
    <property type="protein sequence ID" value="ENSP00000383421.3"/>
    <property type="RefSeq nucleotide sequence ID" value="NM_144770.5"/>
    <property type="RefSeq protein sequence ID" value="NP_658983.3"/>
</dbReference>
<dbReference type="UCSC" id="uc002yjo.5">
    <molecule id="P57052-1"/>
    <property type="organism name" value="human"/>
</dbReference>
<dbReference type="AGR" id="HGNC:9897"/>
<dbReference type="CTD" id="54033"/>
<dbReference type="DisGeNET" id="54033"/>
<dbReference type="GeneCards" id="RBM11"/>
<dbReference type="HGNC" id="HGNC:9897">
    <property type="gene designation" value="RBM11"/>
</dbReference>
<dbReference type="HPA" id="ENSG00000185272">
    <property type="expression patterns" value="Tissue enriched (epididymis)"/>
</dbReference>
<dbReference type="MIM" id="617937">
    <property type="type" value="gene"/>
</dbReference>
<dbReference type="neXtProt" id="NX_P57052"/>
<dbReference type="OpenTargets" id="ENSG00000185272"/>
<dbReference type="PharmGKB" id="PA34260"/>
<dbReference type="VEuPathDB" id="HostDB:ENSG00000185272"/>
<dbReference type="eggNOG" id="ENOG502RYIT">
    <property type="taxonomic scope" value="Eukaryota"/>
</dbReference>
<dbReference type="GeneTree" id="ENSGT00870000136493"/>
<dbReference type="HOGENOM" id="CLU_1165534_0_0_1"/>
<dbReference type="InParanoid" id="P57052"/>
<dbReference type="OMA" id="MQFSPIN"/>
<dbReference type="OrthoDB" id="407442at2759"/>
<dbReference type="PAN-GO" id="P57052">
    <property type="GO annotations" value="3 GO annotations based on evolutionary models"/>
</dbReference>
<dbReference type="PhylomeDB" id="P57052"/>
<dbReference type="TreeFam" id="TF323596"/>
<dbReference type="PathwayCommons" id="P57052"/>
<dbReference type="SignaLink" id="P57052"/>
<dbReference type="BioGRID-ORCS" id="54033">
    <property type="hits" value="11 hits in 1147 CRISPR screens"/>
</dbReference>
<dbReference type="CD-CODE" id="804901D1">
    <property type="entry name" value="Nuclear speckle"/>
</dbReference>
<dbReference type="ChiTaRS" id="RBM11">
    <property type="organism name" value="human"/>
</dbReference>
<dbReference type="EvolutionaryTrace" id="P57052"/>
<dbReference type="GeneWiki" id="RBM11"/>
<dbReference type="GenomeRNAi" id="54033"/>
<dbReference type="Pharos" id="P57052">
    <property type="development level" value="Tbio"/>
</dbReference>
<dbReference type="PRO" id="PR:P57052"/>
<dbReference type="Proteomes" id="UP000005640">
    <property type="component" value="Chromosome 21"/>
</dbReference>
<dbReference type="RNAct" id="P57052">
    <property type="molecule type" value="protein"/>
</dbReference>
<dbReference type="Bgee" id="ENSG00000185272">
    <property type="expression patterns" value="Expressed in corpus epididymis and 126 other cell types or tissues"/>
</dbReference>
<dbReference type="GO" id="GO:0016607">
    <property type="term" value="C:nuclear speck"/>
    <property type="evidence" value="ECO:0000314"/>
    <property type="project" value="MGI"/>
</dbReference>
<dbReference type="GO" id="GO:0005654">
    <property type="term" value="C:nucleoplasm"/>
    <property type="evidence" value="ECO:0000314"/>
    <property type="project" value="HPA"/>
</dbReference>
<dbReference type="GO" id="GO:0005634">
    <property type="term" value="C:nucleus"/>
    <property type="evidence" value="ECO:0000314"/>
    <property type="project" value="MGI"/>
</dbReference>
<dbReference type="GO" id="GO:0008266">
    <property type="term" value="F:poly(U) RNA binding"/>
    <property type="evidence" value="ECO:0000314"/>
    <property type="project" value="MGI"/>
</dbReference>
<dbReference type="GO" id="GO:0042803">
    <property type="term" value="F:protein homodimerization activity"/>
    <property type="evidence" value="ECO:0000314"/>
    <property type="project" value="MGI"/>
</dbReference>
<dbReference type="GO" id="GO:0003727">
    <property type="term" value="F:single-stranded RNA binding"/>
    <property type="evidence" value="ECO:0000318"/>
    <property type="project" value="GO_Central"/>
</dbReference>
<dbReference type="GO" id="GO:0030154">
    <property type="term" value="P:cell differentiation"/>
    <property type="evidence" value="ECO:0007669"/>
    <property type="project" value="UniProtKB-KW"/>
</dbReference>
<dbReference type="GO" id="GO:0034599">
    <property type="term" value="P:cellular response to oxidative stress"/>
    <property type="evidence" value="ECO:0000314"/>
    <property type="project" value="MGI"/>
</dbReference>
<dbReference type="GO" id="GO:0006397">
    <property type="term" value="P:mRNA processing"/>
    <property type="evidence" value="ECO:0007669"/>
    <property type="project" value="UniProtKB-KW"/>
</dbReference>
<dbReference type="GO" id="GO:0000381">
    <property type="term" value="P:regulation of alternative mRNA splicing, via spliceosome"/>
    <property type="evidence" value="ECO:0000314"/>
    <property type="project" value="MGI"/>
</dbReference>
<dbReference type="GO" id="GO:0008380">
    <property type="term" value="P:RNA splicing"/>
    <property type="evidence" value="ECO:0007669"/>
    <property type="project" value="UniProtKB-KW"/>
</dbReference>
<dbReference type="CDD" id="cd12593">
    <property type="entry name" value="RRM_RBM11"/>
    <property type="match status" value="1"/>
</dbReference>
<dbReference type="FunFam" id="3.30.70.330:FF:000325">
    <property type="entry name" value="splicing regulator RBM11 isoform X1"/>
    <property type="match status" value="1"/>
</dbReference>
<dbReference type="Gene3D" id="3.30.70.330">
    <property type="match status" value="1"/>
</dbReference>
<dbReference type="InterPro" id="IPR052285">
    <property type="entry name" value="NEXT_complex_subunit"/>
</dbReference>
<dbReference type="InterPro" id="IPR012677">
    <property type="entry name" value="Nucleotide-bd_a/b_plait_sf"/>
</dbReference>
<dbReference type="InterPro" id="IPR035979">
    <property type="entry name" value="RBD_domain_sf"/>
</dbReference>
<dbReference type="InterPro" id="IPR034501">
    <property type="entry name" value="RBM11_RRM"/>
</dbReference>
<dbReference type="InterPro" id="IPR000504">
    <property type="entry name" value="RRM_dom"/>
</dbReference>
<dbReference type="PANTHER" id="PTHR13798">
    <property type="entry name" value="RNA BINDING MOTIF RBM PROTEIN -RELATED"/>
    <property type="match status" value="1"/>
</dbReference>
<dbReference type="PANTHER" id="PTHR13798:SF5">
    <property type="entry name" value="SPLICING REGULATOR RBM11"/>
    <property type="match status" value="1"/>
</dbReference>
<dbReference type="Pfam" id="PF00076">
    <property type="entry name" value="RRM_1"/>
    <property type="match status" value="1"/>
</dbReference>
<dbReference type="SMART" id="SM00360">
    <property type="entry name" value="RRM"/>
    <property type="match status" value="1"/>
</dbReference>
<dbReference type="SUPFAM" id="SSF54928">
    <property type="entry name" value="RNA-binding domain, RBD"/>
    <property type="match status" value="1"/>
</dbReference>
<dbReference type="PROSITE" id="PS50102">
    <property type="entry name" value="RRM"/>
    <property type="match status" value="1"/>
</dbReference>
<comment type="function">
    <text evidence="5">Tissue-specific splicing factor with potential implication in the regulation of alternative splicing during neuron and germ cell differentiation. Antagonizes SRSF1-mediated BCL-X splicing. May affect the choice of alternative 5' splice sites by binding to specific sequences in exons and antagonizing the SR protein SRSF1.</text>
</comment>
<comment type="subunit">
    <text evidence="5">Homodimer.</text>
</comment>
<comment type="interaction">
    <interactant intactId="EBI-741332">
        <id>P57052</id>
    </interactant>
    <interactant intactId="EBI-745689">
        <id>Q7L5A3</id>
        <label>ATOSB</label>
    </interactant>
    <organismsDiffer>false</organismsDiffer>
    <experiments>3</experiments>
</comment>
<comment type="interaction">
    <interactant intactId="EBI-741332">
        <id>P57052</id>
    </interactant>
    <interactant intactId="EBI-351257">
        <id>P26196</id>
        <label>DDX6</label>
    </interactant>
    <organismsDiffer>false</organismsDiffer>
    <experiments>3</experiments>
</comment>
<comment type="interaction">
    <interactant intactId="EBI-741332">
        <id>P57052</id>
    </interactant>
    <interactant intactId="EBI-740376">
        <id>Q86UW9</id>
        <label>DTX2</label>
    </interactant>
    <organismsDiffer>false</organismsDiffer>
    <experiments>3</experiments>
</comment>
<comment type="interaction">
    <interactant intactId="EBI-741332">
        <id>P57052</id>
    </interactant>
    <interactant intactId="EBI-744099">
        <id>Q9H0I2</id>
        <label>ENKD1</label>
    </interactant>
    <organismsDiffer>false</organismsDiffer>
    <experiments>3</experiments>
</comment>
<comment type="interaction">
    <interactant intactId="EBI-741332">
        <id>P57052</id>
    </interactant>
    <interactant intactId="EBI-9641086">
        <id>P21333-2</id>
        <label>FLNA</label>
    </interactant>
    <organismsDiffer>false</organismsDiffer>
    <experiments>3</experiments>
</comment>
<comment type="interaction">
    <interactant intactId="EBI-741332">
        <id>P57052</id>
    </interactant>
    <interactant intactId="EBI-618165">
        <id>Q06547</id>
        <label>GABPB1</label>
    </interactant>
    <organismsDiffer>false</organismsDiffer>
    <experiments>3</experiments>
</comment>
<comment type="interaction">
    <interactant intactId="EBI-741332">
        <id>P57052</id>
    </interactant>
    <interactant intactId="EBI-372506">
        <id>Q8TAE8</id>
        <label>GADD45GIP1</label>
    </interactant>
    <organismsDiffer>false</organismsDiffer>
    <experiments>3</experiments>
</comment>
<comment type="interaction">
    <interactant intactId="EBI-741332">
        <id>P57052</id>
    </interactant>
    <interactant intactId="EBI-7251368">
        <id>Q9BZE0</id>
        <label>GLIS2</label>
    </interactant>
    <organismsDiffer>false</organismsDiffer>
    <experiments>3</experiments>
</comment>
<comment type="interaction">
    <interactant intactId="EBI-741332">
        <id>P57052</id>
    </interactant>
    <interactant intactId="EBI-11959863">
        <id>Q9NWQ4-1</id>
        <label>GPATCH2L</label>
    </interactant>
    <organismsDiffer>false</organismsDiffer>
    <experiments>3</experiments>
</comment>
<comment type="interaction">
    <interactant intactId="EBI-741332">
        <id>P57052</id>
    </interactant>
    <interactant intactId="EBI-517086">
        <id>O43464</id>
        <label>HTRA2</label>
    </interactant>
    <organismsDiffer>false</organismsDiffer>
    <experiments>3</experiments>
</comment>
<comment type="interaction">
    <interactant intactId="EBI-741332">
        <id>P57052</id>
    </interactant>
    <interactant intactId="EBI-466029">
        <id>P42858</id>
        <label>HTT</label>
    </interactant>
    <organismsDiffer>false</organismsDiffer>
    <experiments>9</experiments>
</comment>
<comment type="interaction">
    <interactant intactId="EBI-741332">
        <id>P57052</id>
    </interactant>
    <interactant intactId="EBI-1055254">
        <id>Q8WXH2</id>
        <label>JPH3</label>
    </interactant>
    <organismsDiffer>false</organismsDiffer>
    <experiments>3</experiments>
</comment>
<comment type="interaction">
    <interactant intactId="EBI-741332">
        <id>P57052</id>
    </interactant>
    <interactant intactId="EBI-1050743">
        <id>P31153</id>
        <label>MAT2A</label>
    </interactant>
    <organismsDiffer>false</organismsDiffer>
    <experiments>3</experiments>
</comment>
<comment type="interaction">
    <interactant intactId="EBI-741332">
        <id>P57052</id>
    </interactant>
    <interactant intactId="EBI-709754">
        <id>Q9HB07</id>
        <label>MYG1</label>
    </interactant>
    <organismsDiffer>false</organismsDiffer>
    <experiments>3</experiments>
</comment>
<comment type="interaction">
    <interactant intactId="EBI-741332">
        <id>P57052</id>
    </interactant>
    <interactant intactId="EBI-7950783">
        <id>Q96JP2</id>
        <label>MYO15B</label>
    </interactant>
    <organismsDiffer>false</organismsDiffer>
    <experiments>3</experiments>
</comment>
<comment type="interaction">
    <interactant intactId="EBI-741332">
        <id>P57052</id>
    </interactant>
    <interactant intactId="EBI-713665">
        <id>P19404</id>
        <label>NDUFV2</label>
    </interactant>
    <organismsDiffer>false</organismsDiffer>
    <experiments>3</experiments>
</comment>
<comment type="interaction">
    <interactant intactId="EBI-741332">
        <id>P57052</id>
    </interactant>
    <interactant intactId="EBI-1391623">
        <id>P29474</id>
        <label>NOS3</label>
    </interactant>
    <organismsDiffer>false</organismsDiffer>
    <experiments>3</experiments>
</comment>
<comment type="interaction">
    <interactant intactId="EBI-741332">
        <id>P57052</id>
    </interactant>
    <interactant intactId="EBI-473160">
        <id>Q8N2W9</id>
        <label>PIAS4</label>
    </interactant>
    <organismsDiffer>false</organismsDiffer>
    <experiments>3</experiments>
</comment>
<comment type="interaction">
    <interactant intactId="EBI-741332">
        <id>P57052</id>
    </interactant>
    <interactant intactId="EBI-14066006">
        <id>Q4G0R1</id>
        <label>PIBF1</label>
    </interactant>
    <organismsDiffer>false</organismsDiffer>
    <experiments>3</experiments>
</comment>
<comment type="interaction">
    <interactant intactId="EBI-741332">
        <id>P57052</id>
    </interactant>
    <interactant intactId="EBI-50433196">
        <id>A0A6Q8PF08</id>
        <label>PMP22</label>
    </interactant>
    <organismsDiffer>false</organismsDiffer>
    <experiments>3</experiments>
</comment>
<comment type="interaction">
    <interactant intactId="EBI-741332">
        <id>P57052</id>
    </interactant>
    <interactant intactId="EBI-752074">
        <id>P41219</id>
        <label>PRPH</label>
    </interactant>
    <organismsDiffer>false</organismsDiffer>
    <experiments>3</experiments>
</comment>
<comment type="interaction">
    <interactant intactId="EBI-741332">
        <id>P57052</id>
    </interactant>
    <interactant intactId="EBI-945792">
        <id>Q96PU8</id>
        <label>QKI</label>
    </interactant>
    <organismsDiffer>false</organismsDiffer>
    <experiments>3</experiments>
</comment>
<comment type="interaction">
    <interactant intactId="EBI-741332">
        <id>P57052</id>
    </interactant>
    <interactant intactId="EBI-12000762">
        <id>Q7Z5V6-2</id>
        <label>SAXO4</label>
    </interactant>
    <organismsDiffer>false</organismsDiffer>
    <experiments>3</experiments>
</comment>
<comment type="interaction">
    <interactant intactId="EBI-741332">
        <id>P57052</id>
    </interactant>
    <interactant intactId="EBI-748391">
        <id>Q9BWG6</id>
        <label>SCNM1</label>
    </interactant>
    <organismsDiffer>false</organismsDiffer>
    <experiments>3</experiments>
</comment>
<comment type="interaction">
    <interactant intactId="EBI-741332">
        <id>P57052</id>
    </interactant>
    <interactant intactId="EBI-985879">
        <id>P37840</id>
        <label>SNCA</label>
    </interactant>
    <organismsDiffer>false</organismsDiffer>
    <experiments>3</experiments>
</comment>
<comment type="interaction">
    <interactant intactId="EBI-741332">
        <id>P57052</id>
    </interactant>
    <interactant intactId="EBI-607085">
        <id>P09012</id>
        <label>SNRPA</label>
    </interactant>
    <organismsDiffer>false</organismsDiffer>
    <experiments>3</experiments>
</comment>
<comment type="interaction">
    <interactant intactId="EBI-741332">
        <id>P57052</id>
    </interactant>
    <interactant intactId="EBI-10246938">
        <id>Q5TAL4</id>
        <label>SNRPC</label>
    </interactant>
    <organismsDiffer>false</organismsDiffer>
    <experiments>3</experiments>
</comment>
<comment type="interaction">
    <interactant intactId="EBI-741332">
        <id>P57052</id>
    </interactant>
    <interactant intactId="EBI-11097439">
        <id>P26368-2</id>
        <label>U2AF2</label>
    </interactant>
    <organismsDiffer>false</organismsDiffer>
    <experiments>3</experiments>
</comment>
<comment type="interaction">
    <interactant intactId="EBI-741332">
        <id>P57052</id>
    </interactant>
    <interactant intactId="EBI-1263058">
        <id>Q6NZY4</id>
        <label>ZCCHC8</label>
    </interactant>
    <organismsDiffer>false</organismsDiffer>
    <experiments>4</experiments>
</comment>
<comment type="interaction">
    <interactant intactId="EBI-741332">
        <id>P57052</id>
    </interactant>
    <interactant intactId="EBI-10237226">
        <id>Q15911-2</id>
        <label>ZFHX3</label>
    </interactant>
    <organismsDiffer>false</organismsDiffer>
    <experiments>3</experiments>
</comment>
<comment type="interaction">
    <interactant intactId="EBI-741332">
        <id>P57052</id>
    </interactant>
    <interactant intactId="EBI-747061">
        <id>O75800</id>
        <label>ZMYND10</label>
    </interactant>
    <organismsDiffer>false</organismsDiffer>
    <experiments>3</experiments>
</comment>
<comment type="interaction">
    <interactant intactId="EBI-741332">
        <id>P57052</id>
    </interactant>
    <interactant intactId="EBI-744257">
        <id>Q96IQ9</id>
        <label>ZNF414</label>
    </interactant>
    <organismsDiffer>false</organismsDiffer>
    <experiments>3</experiments>
</comment>
<comment type="interaction">
    <interactant intactId="EBI-741332">
        <id>P57052</id>
    </interactant>
    <interactant intactId="EBI-10251462">
        <id>Q6NX45</id>
        <label>ZNF774</label>
    </interactant>
    <organismsDiffer>false</organismsDiffer>
    <experiments>3</experiments>
</comment>
<comment type="subcellular location">
    <subcellularLocation>
        <location evidence="5">Nucleus</location>
        <location evidence="5">Nucleoplasm</location>
    </subcellularLocation>
    <subcellularLocation>
        <location evidence="5">Nucleus speckle</location>
    </subcellularLocation>
    <text>Enriched in SRSF2-containing splicing speckles; shuttles between nucleoplasm and speckles.</text>
</comment>
<comment type="alternative products">
    <event type="alternative splicing"/>
    <isoform>
        <id>P57052-1</id>
        <name>1</name>
        <sequence type="displayed"/>
    </isoform>
    <isoform>
        <id>P57052-3</id>
        <name>3</name>
        <sequence type="described" ref="VSP_061576 VSP_061577"/>
    </isoform>
</comment>
<comment type="tissue specificity">
    <text evidence="3 4 5">Expressed in brain, hippocampus, prefrontal cortex, cerebellum, spinal cord, testis, mammary gland, spleen and kidney. Also expressed in fetal brain.</text>
</comment>
<comment type="miscellaneous">
    <molecule>Isoform 3</molecule>
    <text evidence="6">May be produced at very low levels due to a premature stop CC codon in the mRNA, leading to nonsense-mediated mRNA decay.</text>
</comment>
<comment type="sequence caution" evidence="6">
    <conflict type="erroneous initiation">
        <sequence resource="EMBL-CDS" id="AAH30196"/>
    </conflict>
    <text>Truncated N-terminus.</text>
</comment>
<comment type="sequence caution" evidence="6">
    <conflict type="frameshift">
        <sequence resource="EMBL-CDS" id="AAL82535"/>
    </conflict>
</comment>
<comment type="sequence caution" evidence="6">
    <conflict type="erroneous translation">
        <sequence resource="EMBL-CDS" id="AAM75350"/>
    </conflict>
    <text>Wrong choice of frame.</text>
</comment>
<comment type="sequence caution" evidence="6">
    <conflict type="frameshift">
        <sequence resource="EMBL-CDS" id="BAC03638"/>
    </conflict>
</comment>
<keyword id="KW-0002">3D-structure</keyword>
<keyword id="KW-0025">Alternative splicing</keyword>
<keyword id="KW-0217">Developmental protein</keyword>
<keyword id="KW-0221">Differentiation</keyword>
<keyword id="KW-0507">mRNA processing</keyword>
<keyword id="KW-0508">mRNA splicing</keyword>
<keyword id="KW-0539">Nucleus</keyword>
<keyword id="KW-1267">Proteomics identification</keyword>
<keyword id="KW-1185">Reference proteome</keyword>
<keyword id="KW-0694">RNA-binding</keyword>
<organism>
    <name type="scientific">Homo sapiens</name>
    <name type="common">Human</name>
    <dbReference type="NCBI Taxonomy" id="9606"/>
    <lineage>
        <taxon>Eukaryota</taxon>
        <taxon>Metazoa</taxon>
        <taxon>Chordata</taxon>
        <taxon>Craniata</taxon>
        <taxon>Vertebrata</taxon>
        <taxon>Euteleostomi</taxon>
        <taxon>Mammalia</taxon>
        <taxon>Eutheria</taxon>
        <taxon>Euarchontoglires</taxon>
        <taxon>Primates</taxon>
        <taxon>Haplorrhini</taxon>
        <taxon>Catarrhini</taxon>
        <taxon>Hominidae</taxon>
        <taxon>Homo</taxon>
    </lineage>
</organism>
<evidence type="ECO:0000255" key="1">
    <source>
        <dbReference type="PROSITE-ProRule" id="PRU00176"/>
    </source>
</evidence>
<evidence type="ECO:0000256" key="2">
    <source>
        <dbReference type="SAM" id="MobiDB-lite"/>
    </source>
</evidence>
<evidence type="ECO:0000269" key="3">
    <source>
    </source>
</evidence>
<evidence type="ECO:0000269" key="4">
    <source>
    </source>
</evidence>
<evidence type="ECO:0000269" key="5">
    <source>
    </source>
</evidence>
<evidence type="ECO:0000305" key="6"/>
<evidence type="ECO:0000312" key="7">
    <source>
        <dbReference type="HGNC" id="HGNC:9897"/>
    </source>
</evidence>
<evidence type="ECO:0007829" key="8">
    <source>
        <dbReference type="PDB" id="2YWK"/>
    </source>
</evidence>